<reference key="1">
    <citation type="submission" date="2006-09" db="EMBL/GenBank/DDBJ databases">
        <title>Complete sequence of chromosome 1 of Shewanella sp. ANA-3.</title>
        <authorList>
            <person name="Copeland A."/>
            <person name="Lucas S."/>
            <person name="Lapidus A."/>
            <person name="Barry K."/>
            <person name="Detter J.C."/>
            <person name="Glavina del Rio T."/>
            <person name="Hammon N."/>
            <person name="Israni S."/>
            <person name="Dalin E."/>
            <person name="Tice H."/>
            <person name="Pitluck S."/>
            <person name="Chertkov O."/>
            <person name="Brettin T."/>
            <person name="Bruce D."/>
            <person name="Han C."/>
            <person name="Tapia R."/>
            <person name="Gilna P."/>
            <person name="Schmutz J."/>
            <person name="Larimer F."/>
            <person name="Land M."/>
            <person name="Hauser L."/>
            <person name="Kyrpides N."/>
            <person name="Kim E."/>
            <person name="Newman D."/>
            <person name="Salticov C."/>
            <person name="Konstantinidis K."/>
            <person name="Klappenback J."/>
            <person name="Tiedje J."/>
            <person name="Richardson P."/>
        </authorList>
    </citation>
    <scope>NUCLEOTIDE SEQUENCE [LARGE SCALE GENOMIC DNA]</scope>
    <source>
        <strain>ANA-3</strain>
    </source>
</reference>
<sequence length="110" mass="12071">MEVLAKHRFARTSAQKARLVADQIRGLPVAKALEILTFSPKKAAVLVKKVLDSAIANAEHNEGADIDELKVGAVFVDEGPTMKRIMPRAKGRADRIMKRTSHITVVVSDR</sequence>
<comment type="function">
    <text evidence="1">This protein binds specifically to 23S rRNA; its binding is stimulated by other ribosomal proteins, e.g. L4, L17, and L20. It is important during the early stages of 50S assembly. It makes multiple contacts with different domains of the 23S rRNA in the assembled 50S subunit and ribosome (By similarity).</text>
</comment>
<comment type="function">
    <text evidence="1">The globular domain of the protein is located near the polypeptide exit tunnel on the outside of the subunit, while an extended beta-hairpin is found that lines the wall of the exit tunnel in the center of the 70S ribosome.</text>
</comment>
<comment type="subunit">
    <text evidence="1">Part of the 50S ribosomal subunit.</text>
</comment>
<comment type="similarity">
    <text evidence="1">Belongs to the universal ribosomal protein uL22 family.</text>
</comment>
<feature type="chain" id="PRO_1000052649" description="Large ribosomal subunit protein uL22">
    <location>
        <begin position="1"/>
        <end position="110"/>
    </location>
</feature>
<keyword id="KW-0687">Ribonucleoprotein</keyword>
<keyword id="KW-0689">Ribosomal protein</keyword>
<keyword id="KW-0694">RNA-binding</keyword>
<keyword id="KW-0699">rRNA-binding</keyword>
<proteinExistence type="inferred from homology"/>
<evidence type="ECO:0000255" key="1">
    <source>
        <dbReference type="HAMAP-Rule" id="MF_01331"/>
    </source>
</evidence>
<evidence type="ECO:0000305" key="2"/>
<dbReference type="EMBL" id="CP000469">
    <property type="protein sequence ID" value="ABK46448.1"/>
    <property type="molecule type" value="Genomic_DNA"/>
</dbReference>
<dbReference type="RefSeq" id="WP_006083595.1">
    <property type="nucleotide sequence ID" value="NC_008577.1"/>
</dbReference>
<dbReference type="SMR" id="A0KRM9"/>
<dbReference type="STRING" id="94122.Shewana3_0204"/>
<dbReference type="GeneID" id="94726191"/>
<dbReference type="KEGG" id="shn:Shewana3_0204"/>
<dbReference type="eggNOG" id="COG0091">
    <property type="taxonomic scope" value="Bacteria"/>
</dbReference>
<dbReference type="HOGENOM" id="CLU_083987_3_3_6"/>
<dbReference type="OrthoDB" id="9805969at2"/>
<dbReference type="Proteomes" id="UP000002589">
    <property type="component" value="Chromosome"/>
</dbReference>
<dbReference type="GO" id="GO:0022625">
    <property type="term" value="C:cytosolic large ribosomal subunit"/>
    <property type="evidence" value="ECO:0007669"/>
    <property type="project" value="TreeGrafter"/>
</dbReference>
<dbReference type="GO" id="GO:0019843">
    <property type="term" value="F:rRNA binding"/>
    <property type="evidence" value="ECO:0007669"/>
    <property type="project" value="UniProtKB-UniRule"/>
</dbReference>
<dbReference type="GO" id="GO:0003735">
    <property type="term" value="F:structural constituent of ribosome"/>
    <property type="evidence" value="ECO:0007669"/>
    <property type="project" value="InterPro"/>
</dbReference>
<dbReference type="GO" id="GO:0006412">
    <property type="term" value="P:translation"/>
    <property type="evidence" value="ECO:0007669"/>
    <property type="project" value="UniProtKB-UniRule"/>
</dbReference>
<dbReference type="CDD" id="cd00336">
    <property type="entry name" value="Ribosomal_L22"/>
    <property type="match status" value="1"/>
</dbReference>
<dbReference type="FunFam" id="3.90.470.10:FF:000001">
    <property type="entry name" value="50S ribosomal protein L22"/>
    <property type="match status" value="1"/>
</dbReference>
<dbReference type="Gene3D" id="3.90.470.10">
    <property type="entry name" value="Ribosomal protein L22/L17"/>
    <property type="match status" value="1"/>
</dbReference>
<dbReference type="HAMAP" id="MF_01331_B">
    <property type="entry name" value="Ribosomal_uL22_B"/>
    <property type="match status" value="1"/>
</dbReference>
<dbReference type="InterPro" id="IPR001063">
    <property type="entry name" value="Ribosomal_uL22"/>
</dbReference>
<dbReference type="InterPro" id="IPR005727">
    <property type="entry name" value="Ribosomal_uL22_bac/chlpt-type"/>
</dbReference>
<dbReference type="InterPro" id="IPR047867">
    <property type="entry name" value="Ribosomal_uL22_bac/org-type"/>
</dbReference>
<dbReference type="InterPro" id="IPR018260">
    <property type="entry name" value="Ribosomal_uL22_CS"/>
</dbReference>
<dbReference type="InterPro" id="IPR036394">
    <property type="entry name" value="Ribosomal_uL22_sf"/>
</dbReference>
<dbReference type="NCBIfam" id="TIGR01044">
    <property type="entry name" value="rplV_bact"/>
    <property type="match status" value="1"/>
</dbReference>
<dbReference type="PANTHER" id="PTHR13501">
    <property type="entry name" value="CHLOROPLAST 50S RIBOSOMAL PROTEIN L22-RELATED"/>
    <property type="match status" value="1"/>
</dbReference>
<dbReference type="PANTHER" id="PTHR13501:SF8">
    <property type="entry name" value="LARGE RIBOSOMAL SUBUNIT PROTEIN UL22M"/>
    <property type="match status" value="1"/>
</dbReference>
<dbReference type="Pfam" id="PF00237">
    <property type="entry name" value="Ribosomal_L22"/>
    <property type="match status" value="1"/>
</dbReference>
<dbReference type="SUPFAM" id="SSF54843">
    <property type="entry name" value="Ribosomal protein L22"/>
    <property type="match status" value="1"/>
</dbReference>
<dbReference type="PROSITE" id="PS00464">
    <property type="entry name" value="RIBOSOMAL_L22"/>
    <property type="match status" value="1"/>
</dbReference>
<gene>
    <name evidence="1" type="primary">rplV</name>
    <name type="ordered locus">Shewana3_0204</name>
</gene>
<organism>
    <name type="scientific">Shewanella sp. (strain ANA-3)</name>
    <dbReference type="NCBI Taxonomy" id="94122"/>
    <lineage>
        <taxon>Bacteria</taxon>
        <taxon>Pseudomonadati</taxon>
        <taxon>Pseudomonadota</taxon>
        <taxon>Gammaproteobacteria</taxon>
        <taxon>Alteromonadales</taxon>
        <taxon>Shewanellaceae</taxon>
        <taxon>Shewanella</taxon>
    </lineage>
</organism>
<name>RL22_SHESA</name>
<protein>
    <recommendedName>
        <fullName evidence="1">Large ribosomal subunit protein uL22</fullName>
    </recommendedName>
    <alternativeName>
        <fullName evidence="2">50S ribosomal protein L22</fullName>
    </alternativeName>
</protein>
<accession>A0KRM9</accession>